<comment type="function">
    <text evidence="1">Mitochondrial membrane ATP synthase (F(1)F(0) ATP synthase or Complex V) produces ATP from ADP in the presence of a proton gradient across the membrane which is generated by electron transport complexes of the respiratory chain. F-type ATPases consist of two structural domains, F(1) - containing the extramembraneous catalytic core and F(0) - containing the membrane proton channel, linked together by a central stalk and a peripheral stalk. During catalysis, ATP synthesis in the catalytic domain of F(1) is coupled via a rotary mechanism of the central stalk subunits to proton translocation. Part of the complex F(0) domain. Minor subunit located with subunit a in the membrane (By similarity).</text>
</comment>
<comment type="subunit">
    <text evidence="1">F-type ATPases have 2 components, CF(1) - the catalytic core - and CF(0) - the membrane proton channel.</text>
</comment>
<comment type="subcellular location">
    <subcellularLocation>
        <location>Mitochondrion membrane</location>
        <topology>Single-pass membrane protein</topology>
    </subcellularLocation>
</comment>
<comment type="similarity">
    <text evidence="4">Belongs to the ATPase protein 8 family.</text>
</comment>
<accession>P15997</accession>
<keyword id="KW-0066">ATP synthesis</keyword>
<keyword id="KW-0138">CF(0)</keyword>
<keyword id="KW-0375">Hydrogen ion transport</keyword>
<keyword id="KW-0406">Ion transport</keyword>
<keyword id="KW-0472">Membrane</keyword>
<keyword id="KW-0496">Mitochondrion</keyword>
<keyword id="KW-1185">Reference proteome</keyword>
<keyword id="KW-0812">Transmembrane</keyword>
<keyword id="KW-1133">Transmembrane helix</keyword>
<keyword id="KW-0813">Transport</keyword>
<geneLocation type="mitochondrion"/>
<proteinExistence type="inferred from homology"/>
<dbReference type="EMBL" id="X12631">
    <property type="protein sequence ID" value="CAA31156.2"/>
    <property type="molecule type" value="Genomic_DNA"/>
</dbReference>
<dbReference type="PIR" id="S01504">
    <property type="entry name" value="S01504"/>
</dbReference>
<dbReference type="RefSeq" id="NP_006970.2">
    <property type="nucleotide sequence ID" value="NC_001453.1"/>
</dbReference>
<dbReference type="SMR" id="P15997"/>
<dbReference type="STRING" id="7668.P15997"/>
<dbReference type="EnsemblMetazoa" id="GeneID_2652721_df_mr">
    <property type="protein sequence ID" value="NP_006970"/>
    <property type="gene ID" value="GeneID_2652721"/>
</dbReference>
<dbReference type="GeneID" id="2652721"/>
<dbReference type="KEGG" id="spu:2652721"/>
<dbReference type="CTD" id="4509"/>
<dbReference type="InParanoid" id="P15997"/>
<dbReference type="OMA" id="LEFAWWI"/>
<dbReference type="Proteomes" id="UP000007110">
    <property type="component" value="Unassembled WGS sequence"/>
</dbReference>
<dbReference type="GO" id="GO:0031966">
    <property type="term" value="C:mitochondrial membrane"/>
    <property type="evidence" value="ECO:0007669"/>
    <property type="project" value="UniProtKB-SubCell"/>
</dbReference>
<dbReference type="GO" id="GO:0045259">
    <property type="term" value="C:proton-transporting ATP synthase complex"/>
    <property type="evidence" value="ECO:0007669"/>
    <property type="project" value="UniProtKB-KW"/>
</dbReference>
<dbReference type="GO" id="GO:0015078">
    <property type="term" value="F:proton transmembrane transporter activity"/>
    <property type="evidence" value="ECO:0007669"/>
    <property type="project" value="InterPro"/>
</dbReference>
<dbReference type="GO" id="GO:0015986">
    <property type="term" value="P:proton motive force-driven ATP synthesis"/>
    <property type="evidence" value="ECO:0007669"/>
    <property type="project" value="InterPro"/>
</dbReference>
<dbReference type="InterPro" id="IPR001421">
    <property type="entry name" value="ATP8_metazoa"/>
</dbReference>
<dbReference type="Pfam" id="PF00895">
    <property type="entry name" value="ATP-synt_8"/>
    <property type="match status" value="1"/>
</dbReference>
<reference key="1">
    <citation type="journal article" date="1988" name="J. Mol. Biol.">
        <title>Nucleotide sequence and gene organization of sea urchin mitochondrial DNA.</title>
        <authorList>
            <person name="Jacobs H.T."/>
            <person name="Elliott D.J."/>
            <person name="Math V.B."/>
            <person name="Farquharson A."/>
        </authorList>
    </citation>
    <scope>NUCLEOTIDE SEQUENCE [GENOMIC DNA]</scope>
</reference>
<protein>
    <recommendedName>
        <fullName>ATP synthase protein 8</fullName>
    </recommendedName>
    <alternativeName>
        <fullName>A6L</fullName>
    </alternativeName>
    <alternativeName>
        <fullName>F-ATPase subunit 8</fullName>
    </alternativeName>
</protein>
<evidence type="ECO:0000250" key="1"/>
<evidence type="ECO:0000255" key="2"/>
<evidence type="ECO:0000256" key="3">
    <source>
        <dbReference type="SAM" id="MobiDB-lite"/>
    </source>
</evidence>
<evidence type="ECO:0000305" key="4"/>
<feature type="chain" id="PRO_0000195590" description="ATP synthase protein 8">
    <location>
        <begin position="1"/>
        <end position="55"/>
    </location>
</feature>
<feature type="transmembrane region" description="Helical" evidence="2">
    <location>
        <begin position="8"/>
        <end position="28"/>
    </location>
</feature>
<feature type="region of interest" description="Disordered" evidence="3">
    <location>
        <begin position="34"/>
        <end position="55"/>
    </location>
</feature>
<feature type="compositionally biased region" description="Low complexity" evidence="3">
    <location>
        <begin position="39"/>
        <end position="55"/>
    </location>
</feature>
<name>ATP8_STRPU</name>
<sequence length="55" mass="6252">MPQLEFAWWIVNFSLIWASVLIVISLLLNSFPPNSAGQSSSSLTLNKTTTNWQWL</sequence>
<organism>
    <name type="scientific">Strongylocentrotus purpuratus</name>
    <name type="common">Purple sea urchin</name>
    <dbReference type="NCBI Taxonomy" id="7668"/>
    <lineage>
        <taxon>Eukaryota</taxon>
        <taxon>Metazoa</taxon>
        <taxon>Echinodermata</taxon>
        <taxon>Eleutherozoa</taxon>
        <taxon>Echinozoa</taxon>
        <taxon>Echinoidea</taxon>
        <taxon>Euechinoidea</taxon>
        <taxon>Echinacea</taxon>
        <taxon>Camarodonta</taxon>
        <taxon>Echinidea</taxon>
        <taxon>Strongylocentrotidae</taxon>
        <taxon>Strongylocentrotus</taxon>
    </lineage>
</organism>
<gene>
    <name type="primary">MT-ATP8</name>
    <name type="synonym">ATP8</name>
    <name type="synonym">ATPASE8</name>
    <name type="synonym">MTATP8</name>
</gene>